<feature type="chain" id="PRO_0000241740" description="Ubiquinone biosynthesis O-methyltransferase">
    <location>
        <begin position="1"/>
        <end position="249"/>
    </location>
</feature>
<feature type="region of interest" description="Disordered" evidence="2">
    <location>
        <begin position="1"/>
        <end position="21"/>
    </location>
</feature>
<feature type="binding site" evidence="1">
    <location>
        <position position="52"/>
    </location>
    <ligand>
        <name>S-adenosyl-L-methionine</name>
        <dbReference type="ChEBI" id="CHEBI:59789"/>
    </ligand>
</feature>
<feature type="binding site" evidence="1">
    <location>
        <position position="72"/>
    </location>
    <ligand>
        <name>S-adenosyl-L-methionine</name>
        <dbReference type="ChEBI" id="CHEBI:59789"/>
    </ligand>
</feature>
<feature type="binding site" evidence="1">
    <location>
        <position position="93"/>
    </location>
    <ligand>
        <name>S-adenosyl-L-methionine</name>
        <dbReference type="ChEBI" id="CHEBI:59789"/>
    </ligand>
</feature>
<feature type="binding site" evidence="1">
    <location>
        <position position="137"/>
    </location>
    <ligand>
        <name>S-adenosyl-L-methionine</name>
        <dbReference type="ChEBI" id="CHEBI:59789"/>
    </ligand>
</feature>
<accession>Q2NSL7</accession>
<organism>
    <name type="scientific">Sodalis glossinidius (strain morsitans)</name>
    <dbReference type="NCBI Taxonomy" id="343509"/>
    <lineage>
        <taxon>Bacteria</taxon>
        <taxon>Pseudomonadati</taxon>
        <taxon>Pseudomonadota</taxon>
        <taxon>Gammaproteobacteria</taxon>
        <taxon>Enterobacterales</taxon>
        <taxon>Bruguierivoracaceae</taxon>
        <taxon>Sodalis</taxon>
    </lineage>
</organism>
<protein>
    <recommendedName>
        <fullName evidence="1">Ubiquinone biosynthesis O-methyltransferase</fullName>
    </recommendedName>
    <alternativeName>
        <fullName evidence="1">2-polyprenyl-6-hydroxyphenol methylase</fullName>
        <ecNumber evidence="1">2.1.1.222</ecNumber>
    </alternativeName>
    <alternativeName>
        <fullName evidence="1">3-demethylubiquinone 3-O-methyltransferase</fullName>
        <ecNumber evidence="1">2.1.1.64</ecNumber>
    </alternativeName>
</protein>
<name>UBIG_SODGM</name>
<comment type="function">
    <text evidence="1">O-methyltransferase that catalyzes the 2 O-methylation steps in the ubiquinone biosynthetic pathway.</text>
</comment>
<comment type="catalytic activity">
    <reaction evidence="1">
        <text>a 3-demethylubiquinol + S-adenosyl-L-methionine = a ubiquinol + S-adenosyl-L-homocysteine + H(+)</text>
        <dbReference type="Rhea" id="RHEA:44380"/>
        <dbReference type="Rhea" id="RHEA-COMP:9566"/>
        <dbReference type="Rhea" id="RHEA-COMP:10914"/>
        <dbReference type="ChEBI" id="CHEBI:15378"/>
        <dbReference type="ChEBI" id="CHEBI:17976"/>
        <dbReference type="ChEBI" id="CHEBI:57856"/>
        <dbReference type="ChEBI" id="CHEBI:59789"/>
        <dbReference type="ChEBI" id="CHEBI:84422"/>
        <dbReference type="EC" id="2.1.1.64"/>
    </reaction>
</comment>
<comment type="catalytic activity">
    <reaction evidence="1">
        <text>a 3-(all-trans-polyprenyl)benzene-1,2-diol + S-adenosyl-L-methionine = a 2-methoxy-6-(all-trans-polyprenyl)phenol + S-adenosyl-L-homocysteine + H(+)</text>
        <dbReference type="Rhea" id="RHEA:31411"/>
        <dbReference type="Rhea" id="RHEA-COMP:9550"/>
        <dbReference type="Rhea" id="RHEA-COMP:9551"/>
        <dbReference type="ChEBI" id="CHEBI:15378"/>
        <dbReference type="ChEBI" id="CHEBI:57856"/>
        <dbReference type="ChEBI" id="CHEBI:59789"/>
        <dbReference type="ChEBI" id="CHEBI:62729"/>
        <dbReference type="ChEBI" id="CHEBI:62731"/>
        <dbReference type="EC" id="2.1.1.222"/>
    </reaction>
</comment>
<comment type="pathway">
    <text evidence="1">Cofactor biosynthesis; ubiquinone biosynthesis.</text>
</comment>
<comment type="similarity">
    <text evidence="1">Belongs to the methyltransferase superfamily. UbiG/COQ3 family.</text>
</comment>
<keyword id="KW-0489">Methyltransferase</keyword>
<keyword id="KW-0949">S-adenosyl-L-methionine</keyword>
<keyword id="KW-0808">Transferase</keyword>
<keyword id="KW-0831">Ubiquinone biosynthesis</keyword>
<dbReference type="EC" id="2.1.1.222" evidence="1"/>
<dbReference type="EC" id="2.1.1.64" evidence="1"/>
<dbReference type="EMBL" id="AP008232">
    <property type="protein sequence ID" value="BAE74858.1"/>
    <property type="molecule type" value="Genomic_DNA"/>
</dbReference>
<dbReference type="RefSeq" id="WP_011411403.1">
    <property type="nucleotide sequence ID" value="NC_007712.1"/>
</dbReference>
<dbReference type="SMR" id="Q2NSL7"/>
<dbReference type="STRING" id="343509.SG1583"/>
<dbReference type="KEGG" id="sgl:SG1583"/>
<dbReference type="eggNOG" id="COG2227">
    <property type="taxonomic scope" value="Bacteria"/>
</dbReference>
<dbReference type="HOGENOM" id="CLU_042432_5_0_6"/>
<dbReference type="OrthoDB" id="9801538at2"/>
<dbReference type="BioCyc" id="SGLO343509:SGP1_RS14390-MONOMER"/>
<dbReference type="UniPathway" id="UPA00232"/>
<dbReference type="Proteomes" id="UP000001932">
    <property type="component" value="Chromosome"/>
</dbReference>
<dbReference type="GO" id="GO:0102208">
    <property type="term" value="F:2-polyprenyl-6-hydroxyphenol methylase activity"/>
    <property type="evidence" value="ECO:0007669"/>
    <property type="project" value="UniProtKB-EC"/>
</dbReference>
<dbReference type="GO" id="GO:0061542">
    <property type="term" value="F:3-demethylubiquinol 3-O-methyltransferase activity"/>
    <property type="evidence" value="ECO:0007669"/>
    <property type="project" value="UniProtKB-UniRule"/>
</dbReference>
<dbReference type="GO" id="GO:0010420">
    <property type="term" value="F:polyprenyldihydroxybenzoate methyltransferase activity"/>
    <property type="evidence" value="ECO:0007669"/>
    <property type="project" value="InterPro"/>
</dbReference>
<dbReference type="GO" id="GO:0032259">
    <property type="term" value="P:methylation"/>
    <property type="evidence" value="ECO:0007669"/>
    <property type="project" value="UniProtKB-KW"/>
</dbReference>
<dbReference type="CDD" id="cd02440">
    <property type="entry name" value="AdoMet_MTases"/>
    <property type="match status" value="1"/>
</dbReference>
<dbReference type="FunFam" id="3.40.50.150:FF:000028">
    <property type="entry name" value="Ubiquinone biosynthesis O-methyltransferase"/>
    <property type="match status" value="1"/>
</dbReference>
<dbReference type="Gene3D" id="3.40.50.150">
    <property type="entry name" value="Vaccinia Virus protein VP39"/>
    <property type="match status" value="1"/>
</dbReference>
<dbReference type="HAMAP" id="MF_00472">
    <property type="entry name" value="UbiG"/>
    <property type="match status" value="1"/>
</dbReference>
<dbReference type="InterPro" id="IPR029063">
    <property type="entry name" value="SAM-dependent_MTases_sf"/>
</dbReference>
<dbReference type="InterPro" id="IPR010233">
    <property type="entry name" value="UbiG_MeTrfase"/>
</dbReference>
<dbReference type="NCBIfam" id="TIGR01983">
    <property type="entry name" value="UbiG"/>
    <property type="match status" value="1"/>
</dbReference>
<dbReference type="PANTHER" id="PTHR43464">
    <property type="entry name" value="METHYLTRANSFERASE"/>
    <property type="match status" value="1"/>
</dbReference>
<dbReference type="PANTHER" id="PTHR43464:SF19">
    <property type="entry name" value="UBIQUINONE BIOSYNTHESIS O-METHYLTRANSFERASE, MITOCHONDRIAL"/>
    <property type="match status" value="1"/>
</dbReference>
<dbReference type="Pfam" id="PF13489">
    <property type="entry name" value="Methyltransf_23"/>
    <property type="match status" value="1"/>
</dbReference>
<dbReference type="SUPFAM" id="SSF53335">
    <property type="entry name" value="S-adenosyl-L-methionine-dependent methyltransferases"/>
    <property type="match status" value="1"/>
</dbReference>
<evidence type="ECO:0000255" key="1">
    <source>
        <dbReference type="HAMAP-Rule" id="MF_00472"/>
    </source>
</evidence>
<evidence type="ECO:0000256" key="2">
    <source>
        <dbReference type="SAM" id="MobiDB-lite"/>
    </source>
</evidence>
<gene>
    <name evidence="1" type="primary">ubiG</name>
    <name type="ordered locus">SG1583</name>
</gene>
<sequence length="249" mass="27661">MIPEVSNEASQPAAHRQENVDPNEIAKFDAVAARWWDLEGEFKPLHHINPLRLDYILERSGGLFGKNVLDVGCGGGILAESMAREGAKVTGLDMGAEPLAVARLHALESGVMLAYHQQTVEEHAEAHPGAYDVVTCMEMLEHVPDPASIVRACARLVKPGGEVFFSTLNRNPKAWLMAIVGAEYVLRMVPRGTHDITKFIKPAELLGWVDDTPLREQHIIGLHYNPLRDRFYLGGNVDVNYMLHTRRQA</sequence>
<reference key="1">
    <citation type="journal article" date="2006" name="Genome Res.">
        <title>Massive genome erosion and functional adaptations provide insights into the symbiotic lifestyle of Sodalis glossinidius in the tsetse host.</title>
        <authorList>
            <person name="Toh H."/>
            <person name="Weiss B.L."/>
            <person name="Perkin S.A.H."/>
            <person name="Yamashita A."/>
            <person name="Oshima K."/>
            <person name="Hattori M."/>
            <person name="Aksoy S."/>
        </authorList>
    </citation>
    <scope>NUCLEOTIDE SEQUENCE [LARGE SCALE GENOMIC DNA]</scope>
    <source>
        <strain>morsitans</strain>
    </source>
</reference>
<proteinExistence type="inferred from homology"/>